<gene>
    <name evidence="2" type="primary">APO1</name>
    <name evidence="2" type="synonym">FBOX321</name>
    <name evidence="2" type="synonym">SCM2</name>
    <name evidence="11" type="ORF">OsI_24028</name>
</gene>
<accession>B8B183</accession>
<name>APO1_ORYSI</name>
<proteinExistence type="evidence at protein level"/>
<feature type="chain" id="PRO_0000447617" description="Protein ABERRANT PANICLE ORGANIZATION 1">
    <location>
        <begin position="1"/>
        <end position="429"/>
    </location>
</feature>
<feature type="transmembrane region" description="Helical" evidence="4">
    <location>
        <begin position="72"/>
        <end position="92"/>
    </location>
</feature>
<feature type="transmembrane region" description="Helical" evidence="4">
    <location>
        <begin position="112"/>
        <end position="132"/>
    </location>
</feature>
<feature type="domain" description="F-box" evidence="5">
    <location>
        <begin position="25"/>
        <end position="71"/>
    </location>
</feature>
<feature type="repeat" description="Kelch 1" evidence="4">
    <location>
        <begin position="229"/>
        <end position="277"/>
    </location>
</feature>
<feature type="repeat" description="Kelch 2" evidence="4">
    <location>
        <begin position="284"/>
        <end position="339"/>
    </location>
</feature>
<feature type="repeat" description="Kelch 3" evidence="4">
    <location>
        <begin position="350"/>
        <end position="397"/>
    </location>
</feature>
<feature type="region of interest" description="Disordered" evidence="6">
    <location>
        <begin position="1"/>
        <end position="21"/>
    </location>
</feature>
<feature type="compositionally biased region" description="Pro residues" evidence="6">
    <location>
        <begin position="1"/>
        <end position="11"/>
    </location>
</feature>
<feature type="mutagenesis site" description="In PBN6; bigger peduncle diameter due to larger vascular bundles, increased number of primary rachis branches (PRBs) and of the number of grains per panicle, thus leading to increased grain yield; when associated with C-295 and 315-G--G-317 DEL." evidence="7">
    <original>S</original>
    <variation>P</variation>
    <location>
        <position position="15"/>
    </location>
</feature>
<feature type="mutagenesis site" description="In PBN6; bigger peduncle diameter due to larger vascular bundles, increased number of primary rachis branches (PRBs) and of the number of grains per panicle, thus leading to increased grain yield; when associated with P-15 and 315-G--G-317 DEL." evidence="7">
    <original>R</original>
    <variation>C</variation>
    <location>
        <position position="295"/>
    </location>
</feature>
<feature type="mutagenesis site" description="In PBN6; bigger peduncle diameter due to larger vascular bundles, increased number of primary rachis branches (PRBs) and of the number of grains per panicle, thus leading to increased grain yield; when associated with P-15 and C-295." evidence="7">
    <location>
        <begin position="315"/>
        <end position="317"/>
    </location>
</feature>
<organism>
    <name type="scientific">Oryza sativa subsp. indica</name>
    <name type="common">Rice</name>
    <dbReference type="NCBI Taxonomy" id="39946"/>
    <lineage>
        <taxon>Eukaryota</taxon>
        <taxon>Viridiplantae</taxon>
        <taxon>Streptophyta</taxon>
        <taxon>Embryophyta</taxon>
        <taxon>Tracheophyta</taxon>
        <taxon>Spermatophyta</taxon>
        <taxon>Magnoliopsida</taxon>
        <taxon>Liliopsida</taxon>
        <taxon>Poales</taxon>
        <taxon>Poaceae</taxon>
        <taxon>BOP clade</taxon>
        <taxon>Oryzoideae</taxon>
        <taxon>Oryzeae</taxon>
        <taxon>Oryzinae</taxon>
        <taxon>Oryza</taxon>
        <taxon>Oryza sativa</taxon>
    </lineage>
</organism>
<protein>
    <recommendedName>
        <fullName evidence="2">Protein ABERRANT PANICLE ORGANIZATION 1</fullName>
    </recommendedName>
    <alternativeName>
        <fullName evidence="2">F-box protein 321</fullName>
        <shortName evidence="2">OsFbox321</shortName>
    </alternativeName>
    <alternativeName>
        <fullName evidence="2">Protein STRONG CULM 2</fullName>
    </alternativeName>
</protein>
<sequence length="429" mass="44909">MMNPRRLPPLPSSTSSASAADDMDPRVWRRLPQPLVDRVLACLPTPSFLRLRAACRRFYHLLFSSPFLHSHLLLSPHLPFFAFVVPAAGHLLLLDPTATASWSRLPLPLPPVAGGPAAFSPAAASAGLLAFLSDASGHKTLLLANPITRLLAALPISPTPRLSPTVGLAAGPTSIIAVVAGDDLVSPFAVKNISADTFVADAASVPPSGFWAPSSLLPRLSSLDPGAGMAFASGRFYCMSSSPFAVLVFDVAENVWSKVQPPMRRFLRSPALVELGGGREGAARVALVSAVEKSRLSVPRSVRLWTLRGGGGGGGGGAWTEVARMPPEVHAQFAAAEGGRGFECAAHGDYVVLAPRGPVAQAPTSALVFDSRRDEWRWAPPCPYVVVAHHGGAGAAGFRVFAYEPRLATPAIGLLDATAPVALHGMHDG</sequence>
<evidence type="ECO:0000250" key="1">
    <source>
        <dbReference type="UniProtKB" id="Q39090"/>
    </source>
</evidence>
<evidence type="ECO:0000250" key="2">
    <source>
        <dbReference type="UniProtKB" id="Q655Y0"/>
    </source>
</evidence>
<evidence type="ECO:0000250" key="3">
    <source>
        <dbReference type="UniProtKB" id="Q8LEA8"/>
    </source>
</evidence>
<evidence type="ECO:0000255" key="4"/>
<evidence type="ECO:0000255" key="5">
    <source>
        <dbReference type="PROSITE-ProRule" id="PRU00080"/>
    </source>
</evidence>
<evidence type="ECO:0000256" key="6">
    <source>
        <dbReference type="SAM" id="MobiDB-lite"/>
    </source>
</evidence>
<evidence type="ECO:0000269" key="7">
    <source>
    </source>
</evidence>
<evidence type="ECO:0000269" key="8">
    <source>
    </source>
</evidence>
<evidence type="ECO:0000269" key="9">
    <source>
    </source>
</evidence>
<evidence type="ECO:0000305" key="10"/>
<evidence type="ECO:0000312" key="11">
    <source>
        <dbReference type="EMBL" id="EEC81133.1"/>
    </source>
</evidence>
<dbReference type="EMBL" id="CM000131">
    <property type="protein sequence ID" value="EEC81133.1"/>
    <property type="molecule type" value="Genomic_DNA"/>
</dbReference>
<dbReference type="STRING" id="39946.B8B183"/>
<dbReference type="EnsemblPlants" id="BGIOSGA020722-TA">
    <property type="protein sequence ID" value="BGIOSGA020722-PA"/>
    <property type="gene ID" value="BGIOSGA020722"/>
</dbReference>
<dbReference type="Gramene" id="BGIOSGA020722-TA">
    <property type="protein sequence ID" value="BGIOSGA020722-PA"/>
    <property type="gene ID" value="BGIOSGA020722"/>
</dbReference>
<dbReference type="HOGENOM" id="CLU_038778_2_1_1"/>
<dbReference type="OMA" id="FHIDAGG"/>
<dbReference type="UniPathway" id="UPA00143"/>
<dbReference type="Proteomes" id="UP000007015">
    <property type="component" value="Chromosome 6"/>
</dbReference>
<dbReference type="GO" id="GO:0016020">
    <property type="term" value="C:membrane"/>
    <property type="evidence" value="ECO:0007669"/>
    <property type="project" value="UniProtKB-SubCell"/>
</dbReference>
<dbReference type="GO" id="GO:0030154">
    <property type="term" value="P:cell differentiation"/>
    <property type="evidence" value="ECO:0000315"/>
    <property type="project" value="UniProtKB"/>
</dbReference>
<dbReference type="GO" id="GO:0009908">
    <property type="term" value="P:flower development"/>
    <property type="evidence" value="ECO:0007669"/>
    <property type="project" value="UniProtKB-KW"/>
</dbReference>
<dbReference type="GO" id="GO:0010074">
    <property type="term" value="P:maintenance of meristem identity"/>
    <property type="evidence" value="ECO:0000315"/>
    <property type="project" value="UniProtKB"/>
</dbReference>
<dbReference type="GO" id="GO:0016567">
    <property type="term" value="P:protein ubiquitination"/>
    <property type="evidence" value="ECO:0007669"/>
    <property type="project" value="UniProtKB-UniPathway"/>
</dbReference>
<dbReference type="GO" id="GO:0042127">
    <property type="term" value="P:regulation of cell population proliferation"/>
    <property type="evidence" value="ECO:0007669"/>
    <property type="project" value="EnsemblPlants"/>
</dbReference>
<dbReference type="GO" id="GO:0006355">
    <property type="term" value="P:regulation of DNA-templated transcription"/>
    <property type="evidence" value="ECO:0007669"/>
    <property type="project" value="EnsemblPlants"/>
</dbReference>
<dbReference type="GO" id="GO:0009909">
    <property type="term" value="P:regulation of flower development"/>
    <property type="evidence" value="ECO:0000315"/>
    <property type="project" value="UniProtKB"/>
</dbReference>
<dbReference type="GO" id="GO:1901342">
    <property type="term" value="P:regulation of vasculature development"/>
    <property type="evidence" value="ECO:0000315"/>
    <property type="project" value="UniProtKB"/>
</dbReference>
<dbReference type="GO" id="GO:0010193">
    <property type="term" value="P:response to ozone"/>
    <property type="evidence" value="ECO:0000314"/>
    <property type="project" value="UniProtKB"/>
</dbReference>
<dbReference type="InterPro" id="IPR036047">
    <property type="entry name" value="F-box-like_dom_sf"/>
</dbReference>
<dbReference type="InterPro" id="IPR001810">
    <property type="entry name" value="F-box_dom"/>
</dbReference>
<dbReference type="InterPro" id="IPR011043">
    <property type="entry name" value="Gal_Oxase/kelch_b-propeller"/>
</dbReference>
<dbReference type="InterPro" id="IPR050796">
    <property type="entry name" value="SCF_F-box_component"/>
</dbReference>
<dbReference type="PANTHER" id="PTHR31672">
    <property type="entry name" value="BNACNNG10540D PROTEIN"/>
    <property type="match status" value="1"/>
</dbReference>
<dbReference type="PANTHER" id="PTHR31672:SF12">
    <property type="entry name" value="F-BOX DOMAIN-CONTAINING PROTEIN"/>
    <property type="match status" value="1"/>
</dbReference>
<dbReference type="Pfam" id="PF00646">
    <property type="entry name" value="F-box"/>
    <property type="match status" value="1"/>
</dbReference>
<dbReference type="SMART" id="SM00256">
    <property type="entry name" value="FBOX"/>
    <property type="match status" value="1"/>
</dbReference>
<dbReference type="SUPFAM" id="SSF81383">
    <property type="entry name" value="F-box domain"/>
    <property type="match status" value="1"/>
</dbReference>
<dbReference type="SUPFAM" id="SSF50965">
    <property type="entry name" value="Galactose oxidase, central domain"/>
    <property type="match status" value="1"/>
</dbReference>
<dbReference type="PROSITE" id="PS50181">
    <property type="entry name" value="FBOX"/>
    <property type="match status" value="1"/>
</dbReference>
<comment type="function">
    <text evidence="2 3 7 8 9">Component of SCF(ASK-cullin-F-box) E3 ubiquitin ligase complexes, which may mediate the ubiquitination and subsequent proteasomal degradation of target proteins (By similarity). Together with FL/APO2, involved in the temporal regulation of meristem identity during both vegetative and reproductive developments in an APO2-dependent manner (By similarity). Promotes spikelet formation by suppressing the precocious conversion of inflorescence meristems to spikelet meristems, probably via a positive regulation of class-C floral homeotic genes, but not of class-B genes, and through the control of cell proliferation in meristems (PubMed:21119645). Mediates culm development and strength/diameter enhancement at internodes (PubMed:21119645). Required for the regulation of the plastochron, floral organ identity, and floral determinacy (By similarity). Controls the number of primary rachis branches (PRBs) (PubMed:20151298). May trigger the formation of vascular bundle systems which, consequently, promote carbohydrate translocation to panicles (PubMed:20151298). Involved in ozone-induced grain yield regulation (PubMed:25923431).</text>
</comment>
<comment type="pathway">
    <text evidence="10">Protein modification; protein ubiquitination.</text>
</comment>
<comment type="subunit">
    <text evidence="1 2">Part of a putative SCF (ASK/Cullin/F-box) ubiquitin ligase complex (By similarity). Interacts with FL/APO2 (By similarity).</text>
</comment>
<comment type="subcellular location">
    <subcellularLocation>
        <location evidence="4">Membrane</location>
        <topology evidence="4">Multi-pass membrane protein</topology>
    </subcellularLocation>
</comment>
<comment type="tissue specificity">
    <text evidence="7">Expressed in seedlings, roots, leaves, shoot apical meristem (SAM), developing panicles, and, at lower levels, in developing seeds.</text>
</comment>
<comment type="developmental stage">
    <text evidence="7">Present in the developing vascular bundle systems (PubMed:20151298). In the reproductive phase, first observed in the outer several cell layers of the rachis meristem and primary branch meristems (PubMed:20151298). Confined to panicles primodia and young panicles, particularly in the developing rachis branches (PubMed:20151298).</text>
</comment>
<comment type="induction">
    <text evidence="9">Repressed by ozone.</text>
</comment>
<comment type="domain">
    <text evidence="10">The F-box is necessary for the interaction with ASK proteins.</text>
</comment>
<comment type="disruption phenotype">
    <text evidence="7">Reduced number of primary rachis branches (PRBs) and of the number of grains per panicle, thus leading to reduced grain yield.</text>
</comment>
<comment type="miscellaneous">
    <text evidence="9">Ozone has various impact on different cultivars; O.sativa subsp. japonica cv. Sasanishiki exhibits ozone-induced leaf injury, but no grain yield loss, and, by contrast, O.sativa subsp. indica cv. Habataki has grain yield loss with minimal leaf injury upon ozone treatment.</text>
</comment>
<comment type="miscellaneous">
    <text evidence="7">Plants harboring the PBN6 quantitative trait locus (QTL) (e.g. HI1 allele in O.sativa subsp. indica cv. Habataki) exhibit bigger peduncle diameter due to larger vascular bundles and an increased number of primary rachis branches (PRBs) and of the number of grains per panicle, thus leading to increased grain yield.</text>
</comment>
<comment type="miscellaneous">
    <text evidence="8">Plants harboring the SCM2 quantitative trait locus (QTL) exhibit both an enhancement of culm strength at internodes and an increased spikelet number leading to higher crop productivity and better grain yield.</text>
</comment>
<reference key="1">
    <citation type="journal article" date="2005" name="PLoS Biol.">
        <title>The genomes of Oryza sativa: a history of duplications.</title>
        <authorList>
            <person name="Yu J."/>
            <person name="Wang J."/>
            <person name="Lin W."/>
            <person name="Li S."/>
            <person name="Li H."/>
            <person name="Zhou J."/>
            <person name="Ni P."/>
            <person name="Dong W."/>
            <person name="Hu S."/>
            <person name="Zeng C."/>
            <person name="Zhang J."/>
            <person name="Zhang Y."/>
            <person name="Li R."/>
            <person name="Xu Z."/>
            <person name="Li S."/>
            <person name="Li X."/>
            <person name="Zheng H."/>
            <person name="Cong L."/>
            <person name="Lin L."/>
            <person name="Yin J."/>
            <person name="Geng J."/>
            <person name="Li G."/>
            <person name="Shi J."/>
            <person name="Liu J."/>
            <person name="Lv H."/>
            <person name="Li J."/>
            <person name="Wang J."/>
            <person name="Deng Y."/>
            <person name="Ran L."/>
            <person name="Shi X."/>
            <person name="Wang X."/>
            <person name="Wu Q."/>
            <person name="Li C."/>
            <person name="Ren X."/>
            <person name="Wang J."/>
            <person name="Wang X."/>
            <person name="Li D."/>
            <person name="Liu D."/>
            <person name="Zhang X."/>
            <person name="Ji Z."/>
            <person name="Zhao W."/>
            <person name="Sun Y."/>
            <person name="Zhang Z."/>
            <person name="Bao J."/>
            <person name="Han Y."/>
            <person name="Dong L."/>
            <person name="Ji J."/>
            <person name="Chen P."/>
            <person name="Wu S."/>
            <person name="Liu J."/>
            <person name="Xiao Y."/>
            <person name="Bu D."/>
            <person name="Tan J."/>
            <person name="Yang L."/>
            <person name="Ye C."/>
            <person name="Zhang J."/>
            <person name="Xu J."/>
            <person name="Zhou Y."/>
            <person name="Yu Y."/>
            <person name="Zhang B."/>
            <person name="Zhuang S."/>
            <person name="Wei H."/>
            <person name="Liu B."/>
            <person name="Lei M."/>
            <person name="Yu H."/>
            <person name="Li Y."/>
            <person name="Xu H."/>
            <person name="Wei S."/>
            <person name="He X."/>
            <person name="Fang L."/>
            <person name="Zhang Z."/>
            <person name="Zhang Y."/>
            <person name="Huang X."/>
            <person name="Su Z."/>
            <person name="Tong W."/>
            <person name="Li J."/>
            <person name="Tong Z."/>
            <person name="Li S."/>
            <person name="Ye J."/>
            <person name="Wang L."/>
            <person name="Fang L."/>
            <person name="Lei T."/>
            <person name="Chen C.-S."/>
            <person name="Chen H.-C."/>
            <person name="Xu Z."/>
            <person name="Li H."/>
            <person name="Huang H."/>
            <person name="Zhang F."/>
            <person name="Xu H."/>
            <person name="Li N."/>
            <person name="Zhao C."/>
            <person name="Li S."/>
            <person name="Dong L."/>
            <person name="Huang Y."/>
            <person name="Li L."/>
            <person name="Xi Y."/>
            <person name="Qi Q."/>
            <person name="Li W."/>
            <person name="Zhang B."/>
            <person name="Hu W."/>
            <person name="Zhang Y."/>
            <person name="Tian X."/>
            <person name="Jiao Y."/>
            <person name="Liang X."/>
            <person name="Jin J."/>
            <person name="Gao L."/>
            <person name="Zheng W."/>
            <person name="Hao B."/>
            <person name="Liu S.-M."/>
            <person name="Wang W."/>
            <person name="Yuan L."/>
            <person name="Cao M."/>
            <person name="McDermott J."/>
            <person name="Samudrala R."/>
            <person name="Wang J."/>
            <person name="Wong G.K.-S."/>
            <person name="Yang H."/>
        </authorList>
    </citation>
    <scope>NUCLEOTIDE SEQUENCE [LARGE SCALE GENOMIC DNA]</scope>
    <source>
        <strain>cv. 93-11</strain>
    </source>
</reference>
<reference key="2">
    <citation type="journal article" date="2010" name="Nat. Commun.">
        <title>New approach for rice improvement using a pleiotropic QTL gene for lodging resistance and yield.</title>
        <authorList>
            <person name="Ookawa T."/>
            <person name="Hobo T."/>
            <person name="Yano M."/>
            <person name="Murata K."/>
            <person name="Ando T."/>
            <person name="Miura H."/>
            <person name="Asano K."/>
            <person name="Ochiai Y."/>
            <person name="Ikeda M."/>
            <person name="Nishitani R."/>
            <person name="Ebitani T."/>
            <person name="Ozaki H."/>
            <person name="Angeles E.R."/>
            <person name="Hirasawa T."/>
            <person name="Matsuoka M."/>
        </authorList>
    </citation>
    <scope>FUNCTION</scope>
    <source>
        <strain>cv. Habataki</strain>
    </source>
</reference>
<reference key="3">
    <citation type="journal article" date="2010" name="Theor. Appl. Genet.">
        <title>A gene controlling the number of primary rachis branches also controls the vascular bundle formation and hence is responsible to increase the harvest index and grain yield in rice.</title>
        <authorList>
            <person name="Terao T."/>
            <person name="Nagata K."/>
            <person name="Morino K."/>
            <person name="Hirose T."/>
        </authorList>
    </citation>
    <scope>FUNCTION</scope>
    <scope>DISRUPTION PHENOTYPE</scope>
    <scope>MUTAGENESIS OF SER-15; ARG-295 AND 315-GLY--GLY-317</scope>
    <scope>TISSUE SPECIFICITY</scope>
    <scope>DEVELOPMENTAL STAGE</scope>
    <source>
        <strain>cv. Habataki</strain>
    </source>
</reference>
<reference key="4">
    <citation type="journal article" date="2015" name="PLoS ONE">
        <title>Ozone-induced rice grain yield loss is triggered via a change in panicle morphology that is controlled by ABERRANT PANICLE ORGANIZATION 1 gene.</title>
        <authorList>
            <person name="Tsukahara K."/>
            <person name="Sawada H."/>
            <person name="Kohno Y."/>
            <person name="Matsuura T."/>
            <person name="Mori I.C."/>
            <person name="Terao T."/>
            <person name="Ioki M."/>
            <person name="Tamaoki M."/>
        </authorList>
    </citation>
    <scope>FUNCTION</scope>
    <scope>INDUCTION BY OZONE</scope>
    <source>
        <strain>cv. Habataki</strain>
    </source>
</reference>
<keyword id="KW-0010">Activator</keyword>
<keyword id="KW-0217">Developmental protein</keyword>
<keyword id="KW-0221">Differentiation</keyword>
<keyword id="KW-0287">Flowering</keyword>
<keyword id="KW-0880">Kelch repeat</keyword>
<keyword id="KW-0472">Membrane</keyword>
<keyword id="KW-1185">Reference proteome</keyword>
<keyword id="KW-0677">Repeat</keyword>
<keyword id="KW-0812">Transmembrane</keyword>
<keyword id="KW-1133">Transmembrane helix</keyword>
<keyword id="KW-0833">Ubl conjugation pathway</keyword>